<keyword id="KW-0963">Cytoplasm</keyword>
<keyword id="KW-0255">Endonuclease</keyword>
<keyword id="KW-0378">Hydrolase</keyword>
<keyword id="KW-0479">Metal-binding</keyword>
<keyword id="KW-0540">Nuclease</keyword>
<keyword id="KW-1185">Reference proteome</keyword>
<keyword id="KW-0690">Ribosome biogenesis</keyword>
<keyword id="KW-0698">rRNA processing</keyword>
<keyword id="KW-0862">Zinc</keyword>
<sequence>MTALDIQISVEEGDWPSEDELQGLSTRILDVTVAFLIAEEKQPFPDDPPELSLVFTDDQSIREINAEWRNQDKPTNVLSFPAFPVTPGNMPGPMLGDIIVAYETLEREAAEMEKPFEEHLTHLLVHGFLHLFGYDHIEDDEAERMEGLETRILARLGLSDPYGDQPRIDSLEQ</sequence>
<accession>C3MF10</accession>
<dbReference type="EC" id="3.1.-.-" evidence="1"/>
<dbReference type="EMBL" id="CP001389">
    <property type="protein sequence ID" value="ACP23847.1"/>
    <property type="molecule type" value="Genomic_DNA"/>
</dbReference>
<dbReference type="RefSeq" id="WP_012706632.1">
    <property type="nucleotide sequence ID" value="NC_012587.1"/>
</dbReference>
<dbReference type="RefSeq" id="YP_002824600.1">
    <property type="nucleotide sequence ID" value="NC_012587.1"/>
</dbReference>
<dbReference type="SMR" id="C3MF10"/>
<dbReference type="STRING" id="394.NGR_c00430"/>
<dbReference type="KEGG" id="rhi:NGR_c00430"/>
<dbReference type="PATRIC" id="fig|394.7.peg.2835"/>
<dbReference type="eggNOG" id="COG0319">
    <property type="taxonomic scope" value="Bacteria"/>
</dbReference>
<dbReference type="HOGENOM" id="CLU_106710_0_0_5"/>
<dbReference type="OrthoDB" id="9807740at2"/>
<dbReference type="Proteomes" id="UP000001054">
    <property type="component" value="Chromosome"/>
</dbReference>
<dbReference type="GO" id="GO:0005737">
    <property type="term" value="C:cytoplasm"/>
    <property type="evidence" value="ECO:0007669"/>
    <property type="project" value="UniProtKB-SubCell"/>
</dbReference>
<dbReference type="GO" id="GO:0004222">
    <property type="term" value="F:metalloendopeptidase activity"/>
    <property type="evidence" value="ECO:0007669"/>
    <property type="project" value="InterPro"/>
</dbReference>
<dbReference type="GO" id="GO:0004521">
    <property type="term" value="F:RNA endonuclease activity"/>
    <property type="evidence" value="ECO:0007669"/>
    <property type="project" value="UniProtKB-UniRule"/>
</dbReference>
<dbReference type="GO" id="GO:0008270">
    <property type="term" value="F:zinc ion binding"/>
    <property type="evidence" value="ECO:0007669"/>
    <property type="project" value="UniProtKB-UniRule"/>
</dbReference>
<dbReference type="GO" id="GO:0006364">
    <property type="term" value="P:rRNA processing"/>
    <property type="evidence" value="ECO:0007669"/>
    <property type="project" value="UniProtKB-UniRule"/>
</dbReference>
<dbReference type="Gene3D" id="3.40.390.30">
    <property type="entry name" value="Metalloproteases ('zincins'), catalytic domain"/>
    <property type="match status" value="1"/>
</dbReference>
<dbReference type="HAMAP" id="MF_00009">
    <property type="entry name" value="Endoribonucl_YbeY"/>
    <property type="match status" value="1"/>
</dbReference>
<dbReference type="InterPro" id="IPR023091">
    <property type="entry name" value="MetalPrtase_cat_dom_sf_prd"/>
</dbReference>
<dbReference type="InterPro" id="IPR002036">
    <property type="entry name" value="YbeY"/>
</dbReference>
<dbReference type="InterPro" id="IPR020549">
    <property type="entry name" value="YbeY_CS"/>
</dbReference>
<dbReference type="NCBIfam" id="TIGR00043">
    <property type="entry name" value="rRNA maturation RNase YbeY"/>
    <property type="match status" value="1"/>
</dbReference>
<dbReference type="PANTHER" id="PTHR46986">
    <property type="entry name" value="ENDORIBONUCLEASE YBEY, CHLOROPLASTIC"/>
    <property type="match status" value="1"/>
</dbReference>
<dbReference type="PANTHER" id="PTHR46986:SF1">
    <property type="entry name" value="ENDORIBONUCLEASE YBEY, CHLOROPLASTIC"/>
    <property type="match status" value="1"/>
</dbReference>
<dbReference type="Pfam" id="PF02130">
    <property type="entry name" value="YbeY"/>
    <property type="match status" value="1"/>
</dbReference>
<dbReference type="SUPFAM" id="SSF55486">
    <property type="entry name" value="Metalloproteases ('zincins'), catalytic domain"/>
    <property type="match status" value="1"/>
</dbReference>
<dbReference type="PROSITE" id="PS01306">
    <property type="entry name" value="UPF0054"/>
    <property type="match status" value="1"/>
</dbReference>
<protein>
    <recommendedName>
        <fullName evidence="1">Endoribonuclease YbeY</fullName>
        <ecNumber evidence="1">3.1.-.-</ecNumber>
    </recommendedName>
</protein>
<name>YBEY_SINFN</name>
<organism>
    <name type="scientific">Sinorhizobium fredii (strain NBRC 101917 / NGR234)</name>
    <dbReference type="NCBI Taxonomy" id="394"/>
    <lineage>
        <taxon>Bacteria</taxon>
        <taxon>Pseudomonadati</taxon>
        <taxon>Pseudomonadota</taxon>
        <taxon>Alphaproteobacteria</taxon>
        <taxon>Hyphomicrobiales</taxon>
        <taxon>Rhizobiaceae</taxon>
        <taxon>Sinorhizobium/Ensifer group</taxon>
        <taxon>Sinorhizobium</taxon>
    </lineage>
</organism>
<gene>
    <name evidence="1" type="primary">ybeY</name>
    <name type="ordered locus">NGR_c00430</name>
</gene>
<reference key="1">
    <citation type="journal article" date="2009" name="Appl. Environ. Microbiol.">
        <title>Rhizobium sp. strain NGR234 possesses a remarkable number of secretion systems.</title>
        <authorList>
            <person name="Schmeisser C."/>
            <person name="Liesegang H."/>
            <person name="Krysciak D."/>
            <person name="Bakkou N."/>
            <person name="Le Quere A."/>
            <person name="Wollherr A."/>
            <person name="Heinemeyer I."/>
            <person name="Morgenstern B."/>
            <person name="Pommerening-Roeser A."/>
            <person name="Flores M."/>
            <person name="Palacios R."/>
            <person name="Brenner S."/>
            <person name="Gottschalk G."/>
            <person name="Schmitz R.A."/>
            <person name="Broughton W.J."/>
            <person name="Perret X."/>
            <person name="Strittmatter A.W."/>
            <person name="Streit W.R."/>
        </authorList>
    </citation>
    <scope>NUCLEOTIDE SEQUENCE [LARGE SCALE GENOMIC DNA]</scope>
    <source>
        <strain>NBRC 101917 / NGR234</strain>
    </source>
</reference>
<proteinExistence type="inferred from homology"/>
<comment type="function">
    <text evidence="1">Single strand-specific metallo-endoribonuclease involved in late-stage 70S ribosome quality control and in maturation of the 3' terminus of the 16S rRNA.</text>
</comment>
<comment type="cofactor">
    <cofactor evidence="1">
        <name>Zn(2+)</name>
        <dbReference type="ChEBI" id="CHEBI:29105"/>
    </cofactor>
    <text evidence="1">Binds 1 zinc ion.</text>
</comment>
<comment type="subcellular location">
    <subcellularLocation>
        <location evidence="1">Cytoplasm</location>
    </subcellularLocation>
</comment>
<comment type="similarity">
    <text evidence="1">Belongs to the endoribonuclease YbeY family.</text>
</comment>
<evidence type="ECO:0000255" key="1">
    <source>
        <dbReference type="HAMAP-Rule" id="MF_00009"/>
    </source>
</evidence>
<feature type="chain" id="PRO_1000199990" description="Endoribonuclease YbeY">
    <location>
        <begin position="1"/>
        <end position="173"/>
    </location>
</feature>
<feature type="binding site" evidence="1">
    <location>
        <position position="126"/>
    </location>
    <ligand>
        <name>Zn(2+)</name>
        <dbReference type="ChEBI" id="CHEBI:29105"/>
        <note>catalytic</note>
    </ligand>
</feature>
<feature type="binding site" evidence="1">
    <location>
        <position position="130"/>
    </location>
    <ligand>
        <name>Zn(2+)</name>
        <dbReference type="ChEBI" id="CHEBI:29105"/>
        <note>catalytic</note>
    </ligand>
</feature>
<feature type="binding site" evidence="1">
    <location>
        <position position="136"/>
    </location>
    <ligand>
        <name>Zn(2+)</name>
        <dbReference type="ChEBI" id="CHEBI:29105"/>
        <note>catalytic</note>
    </ligand>
</feature>